<comment type="function">
    <text evidence="1">Transcription factor that plays a role in the activation of archaeal genes transcribed by RNA polymerase. Facilitates transcription initiation by enhancing TATA-box recognition by TATA-box-binding protein (Tbp), and transcription factor B (Tfb) and RNA polymerase recruitment. Not absolutely required for transcription in vitro, but particularly important in cases where Tbp or Tfb function is not optimal. It dynamically alters the nucleic acid-binding properties of RNA polymerases by stabilizing the initiation complex and destabilizing elongation complexes. Seems to translocate with the RNA polymerase following initiation and acts by binding to the non template strand of the transcription bubble in elongation complexes.</text>
</comment>
<comment type="subunit">
    <text evidence="1">Monomer. Interaction with RNA polymerase subunits RpoF and RpoE is necessary for Tfe stimulatory transcription activity. Able to interact with Tbp and RNA polymerase in the absence of DNA promoter. Interacts both with the preinitiation and elongation complexes.</text>
</comment>
<comment type="domain">
    <text evidence="1">The winged helix domain is involved in binding to DNA in the preinitiation complex.</text>
</comment>
<comment type="similarity">
    <text evidence="1">Belongs to the TFE family.</text>
</comment>
<dbReference type="EMBL" id="BA000002">
    <property type="protein sequence ID" value="BAA81014.2"/>
    <property type="molecule type" value="Genomic_DNA"/>
</dbReference>
<dbReference type="PIR" id="F72503">
    <property type="entry name" value="F72503"/>
</dbReference>
<dbReference type="RefSeq" id="WP_010866733.1">
    <property type="nucleotide sequence ID" value="NC_000854.2"/>
</dbReference>
<dbReference type="SMR" id="Q9YAD5"/>
<dbReference type="STRING" id="272557.APE_2004.1"/>
<dbReference type="EnsemblBacteria" id="BAA81014">
    <property type="protein sequence ID" value="BAA81014"/>
    <property type="gene ID" value="APE_2004.1"/>
</dbReference>
<dbReference type="GeneID" id="1445124"/>
<dbReference type="KEGG" id="ape:APE_2004.1"/>
<dbReference type="eggNOG" id="arCOG04270">
    <property type="taxonomic scope" value="Archaea"/>
</dbReference>
<dbReference type="Proteomes" id="UP000002518">
    <property type="component" value="Chromosome"/>
</dbReference>
<dbReference type="GO" id="GO:0003677">
    <property type="term" value="F:DNA binding"/>
    <property type="evidence" value="ECO:0007669"/>
    <property type="project" value="UniProtKB-KW"/>
</dbReference>
<dbReference type="GO" id="GO:0006355">
    <property type="term" value="P:regulation of DNA-templated transcription"/>
    <property type="evidence" value="ECO:0007669"/>
    <property type="project" value="InterPro"/>
</dbReference>
<dbReference type="GO" id="GO:0006367">
    <property type="term" value="P:transcription initiation at RNA polymerase II promoter"/>
    <property type="evidence" value="ECO:0007669"/>
    <property type="project" value="InterPro"/>
</dbReference>
<dbReference type="Gene3D" id="1.10.10.10">
    <property type="entry name" value="Winged helix-like DNA-binding domain superfamily/Winged helix DNA-binding domain"/>
    <property type="match status" value="1"/>
</dbReference>
<dbReference type="HAMAP" id="MF_01909">
    <property type="entry name" value="TFE_arch"/>
    <property type="match status" value="1"/>
</dbReference>
<dbReference type="InterPro" id="IPR016481">
    <property type="entry name" value="TF_E_archaea"/>
</dbReference>
<dbReference type="InterPro" id="IPR039997">
    <property type="entry name" value="TFE"/>
</dbReference>
<dbReference type="InterPro" id="IPR017919">
    <property type="entry name" value="TFIIE/TFIIEa_HTH"/>
</dbReference>
<dbReference type="InterPro" id="IPR002853">
    <property type="entry name" value="TFIIE_asu"/>
</dbReference>
<dbReference type="InterPro" id="IPR024550">
    <property type="entry name" value="TFIIEa/SarR/Rpc3_HTH_dom"/>
</dbReference>
<dbReference type="InterPro" id="IPR036388">
    <property type="entry name" value="WH-like_DNA-bd_sf"/>
</dbReference>
<dbReference type="InterPro" id="IPR036390">
    <property type="entry name" value="WH_DNA-bd_sf"/>
</dbReference>
<dbReference type="InterPro" id="IPR013137">
    <property type="entry name" value="Znf_TFIIB"/>
</dbReference>
<dbReference type="PANTHER" id="PTHR13097:SF7">
    <property type="entry name" value="GENERAL TRANSCRIPTION FACTOR IIE SUBUNIT 1"/>
    <property type="match status" value="1"/>
</dbReference>
<dbReference type="PANTHER" id="PTHR13097">
    <property type="entry name" value="TRANSCRIPTION INITIATION FACTOR IIE, ALPHA SUBUNIT"/>
    <property type="match status" value="1"/>
</dbReference>
<dbReference type="Pfam" id="PF02002">
    <property type="entry name" value="TFIIE_alpha"/>
    <property type="match status" value="1"/>
</dbReference>
<dbReference type="Pfam" id="PF08271">
    <property type="entry name" value="Zn_Ribbon_TF"/>
    <property type="match status" value="1"/>
</dbReference>
<dbReference type="PIRSF" id="PIRSF006373">
    <property type="entry name" value="TF_E_archaea"/>
    <property type="match status" value="1"/>
</dbReference>
<dbReference type="SMART" id="SM00531">
    <property type="entry name" value="TFIIE"/>
    <property type="match status" value="1"/>
</dbReference>
<dbReference type="SUPFAM" id="SSF46785">
    <property type="entry name" value="Winged helix' DNA-binding domain"/>
    <property type="match status" value="1"/>
</dbReference>
<dbReference type="SUPFAM" id="SSF57783">
    <property type="entry name" value="Zinc beta-ribbon"/>
    <property type="match status" value="1"/>
</dbReference>
<dbReference type="PROSITE" id="PS51344">
    <property type="entry name" value="HTH_TFE_IIE"/>
    <property type="match status" value="1"/>
</dbReference>
<sequence>MKGKGRNRAVKSLEIYVRKLAQANGIKPEMAAHIFHLIYEETPNGGISDDDLESLTGYKQSDIRRILRLLGDKRIIVSRKGRHPRKEATRYFWRIDSDTINVSLLTLKKKVLEKLVVKEAHDSGNSYYTCPRCGSKYSFDEAFTLDFTCPRCGEVLEEADSREGLERLRRTIDALREEIARDESRIYRS</sequence>
<accession>Q9YAD5</accession>
<protein>
    <recommendedName>
        <fullName evidence="1">Transcription factor E</fullName>
        <shortName evidence="1">TFE</shortName>
    </recommendedName>
    <alternativeName>
        <fullName evidence="1">TFIIE subunit alpha homolog</fullName>
    </alternativeName>
    <alternativeName>
        <fullName evidence="1">Transcription initiation factor TFIIE</fullName>
    </alternativeName>
</protein>
<keyword id="KW-0238">DNA-binding</keyword>
<keyword id="KW-1185">Reference proteome</keyword>
<keyword id="KW-0804">Transcription</keyword>
<keyword id="KW-0805">Transcription regulation</keyword>
<organism>
    <name type="scientific">Aeropyrum pernix (strain ATCC 700893 / DSM 11879 / JCM 9820 / NBRC 100138 / K1)</name>
    <dbReference type="NCBI Taxonomy" id="272557"/>
    <lineage>
        <taxon>Archaea</taxon>
        <taxon>Thermoproteota</taxon>
        <taxon>Thermoprotei</taxon>
        <taxon>Desulfurococcales</taxon>
        <taxon>Desulfurococcaceae</taxon>
        <taxon>Aeropyrum</taxon>
    </lineage>
</organism>
<feature type="chain" id="PRO_0000326587" description="Transcription factor E">
    <location>
        <begin position="1"/>
        <end position="189"/>
    </location>
</feature>
<feature type="domain" description="HTH TFE/IIEalpha-type" evidence="1">
    <location>
        <begin position="9"/>
        <end position="101"/>
    </location>
</feature>
<evidence type="ECO:0000255" key="1">
    <source>
        <dbReference type="HAMAP-Rule" id="MF_01909"/>
    </source>
</evidence>
<gene>
    <name evidence="1" type="primary">tfe</name>
    <name type="ordered locus">APE_2004.1</name>
</gene>
<name>TFE_AERPE</name>
<proteinExistence type="inferred from homology"/>
<reference key="1">
    <citation type="journal article" date="1999" name="DNA Res.">
        <title>Complete genome sequence of an aerobic hyper-thermophilic crenarchaeon, Aeropyrum pernix K1.</title>
        <authorList>
            <person name="Kawarabayasi Y."/>
            <person name="Hino Y."/>
            <person name="Horikawa H."/>
            <person name="Yamazaki S."/>
            <person name="Haikawa Y."/>
            <person name="Jin-no K."/>
            <person name="Takahashi M."/>
            <person name="Sekine M."/>
            <person name="Baba S."/>
            <person name="Ankai A."/>
            <person name="Kosugi H."/>
            <person name="Hosoyama A."/>
            <person name="Fukui S."/>
            <person name="Nagai Y."/>
            <person name="Nishijima K."/>
            <person name="Nakazawa H."/>
            <person name="Takamiya M."/>
            <person name="Masuda S."/>
            <person name="Funahashi T."/>
            <person name="Tanaka T."/>
            <person name="Kudoh Y."/>
            <person name="Yamazaki J."/>
            <person name="Kushida N."/>
            <person name="Oguchi A."/>
            <person name="Aoki K."/>
            <person name="Kubota K."/>
            <person name="Nakamura Y."/>
            <person name="Nomura N."/>
            <person name="Sako Y."/>
            <person name="Kikuchi H."/>
        </authorList>
    </citation>
    <scope>NUCLEOTIDE SEQUENCE [LARGE SCALE GENOMIC DNA]</scope>
    <source>
        <strain>ATCC 700893 / DSM 11879 / JCM 9820 / NBRC 100138 / K1</strain>
    </source>
</reference>